<dbReference type="EC" id="1.1.1.-" evidence="5"/>
<dbReference type="EMBL" id="U31875">
    <property type="protein sequence ID" value="AAA82048.1"/>
    <property type="molecule type" value="mRNA"/>
</dbReference>
<dbReference type="EMBL" id="AF244132">
    <property type="protein sequence ID" value="AAG33703.1"/>
    <property type="molecule type" value="Genomic_DNA"/>
</dbReference>
<dbReference type="EMBL" id="AK222857">
    <property type="protein sequence ID" value="BAD96577.1"/>
    <property type="molecule type" value="mRNA"/>
</dbReference>
<dbReference type="EMBL" id="AL135999">
    <property type="status" value="NOT_ANNOTATED_CDS"/>
    <property type="molecule type" value="Genomic_DNA"/>
</dbReference>
<dbReference type="EMBL" id="CH471078">
    <property type="protein sequence ID" value="EAW66130.1"/>
    <property type="molecule type" value="Genomic_DNA"/>
</dbReference>
<dbReference type="EMBL" id="CH471078">
    <property type="protein sequence ID" value="EAW66131.1"/>
    <property type="molecule type" value="Genomic_DNA"/>
</dbReference>
<dbReference type="EMBL" id="BC002786">
    <property type="protein sequence ID" value="AAH02786.1"/>
    <property type="molecule type" value="mRNA"/>
</dbReference>
<dbReference type="EMBL" id="BC007339">
    <property type="protein sequence ID" value="AAH07339.2"/>
    <property type="molecule type" value="mRNA"/>
</dbReference>
<dbReference type="CCDS" id="CCDS41927.1">
    <molecule id="Q13268-2"/>
</dbReference>
<dbReference type="CCDS" id="CCDS9604.1">
    <molecule id="Q13268-1"/>
</dbReference>
<dbReference type="PIR" id="S66665">
    <property type="entry name" value="S66665"/>
</dbReference>
<dbReference type="RefSeq" id="NP_005785.1">
    <molecule id="Q13268-1"/>
    <property type="nucleotide sequence ID" value="NM_005794.4"/>
</dbReference>
<dbReference type="RefSeq" id="NP_878912.1">
    <molecule id="Q13268-2"/>
    <property type="nucleotide sequence ID" value="NM_182908.5"/>
</dbReference>
<dbReference type="RefSeq" id="XP_005267306.1">
    <molecule id="Q13268-1"/>
    <property type="nucleotide sequence ID" value="XM_005267249.1"/>
</dbReference>
<dbReference type="RefSeq" id="XP_006720064.1">
    <molecule id="Q13268-1"/>
    <property type="nucleotide sequence ID" value="XM_006720001.4"/>
</dbReference>
<dbReference type="RefSeq" id="XP_047286830.1">
    <molecule id="Q13268-1"/>
    <property type="nucleotide sequence ID" value="XM_047430874.1"/>
</dbReference>
<dbReference type="RefSeq" id="XP_054231223.1">
    <molecule id="Q13268-1"/>
    <property type="nucleotide sequence ID" value="XM_054375248.1"/>
</dbReference>
<dbReference type="RefSeq" id="XP_054231224.1">
    <molecule id="Q13268-1"/>
    <property type="nucleotide sequence ID" value="XM_054375249.1"/>
</dbReference>
<dbReference type="RefSeq" id="XP_054231225.1">
    <molecule id="Q13268-1"/>
    <property type="nucleotide sequence ID" value="XM_054375250.1"/>
</dbReference>
<dbReference type="SMR" id="Q13268"/>
<dbReference type="BioGRID" id="115497">
    <property type="interactions" value="100"/>
</dbReference>
<dbReference type="FunCoup" id="Q13268">
    <property type="interactions" value="1065"/>
</dbReference>
<dbReference type="IntAct" id="Q13268">
    <property type="interactions" value="66"/>
</dbReference>
<dbReference type="STRING" id="9606.ENSP00000344674"/>
<dbReference type="GlyGen" id="Q13268">
    <property type="glycosylation" value="1 site, 1 O-linked glycan (1 site)"/>
</dbReference>
<dbReference type="iPTMnet" id="Q13268"/>
<dbReference type="PhosphoSitePlus" id="Q13268"/>
<dbReference type="BioMuta" id="DHRS2"/>
<dbReference type="DMDM" id="527504085"/>
<dbReference type="jPOST" id="Q13268"/>
<dbReference type="MassIVE" id="Q13268"/>
<dbReference type="PaxDb" id="9606-ENSP00000344674"/>
<dbReference type="PeptideAtlas" id="Q13268"/>
<dbReference type="ProteomicsDB" id="59268">
    <molecule id="Q13268-1"/>
</dbReference>
<dbReference type="ProteomicsDB" id="59269">
    <molecule id="Q13268-2"/>
</dbReference>
<dbReference type="Pumba" id="Q13268"/>
<dbReference type="Antibodypedia" id="22541">
    <property type="antibodies" value="295 antibodies from 28 providers"/>
</dbReference>
<dbReference type="DNASU" id="10202"/>
<dbReference type="Ensembl" id="ENST00000250383.11">
    <molecule id="Q13268-1"/>
    <property type="protein sequence ID" value="ENSP00000250383.7"/>
    <property type="gene ID" value="ENSG00000100867.15"/>
</dbReference>
<dbReference type="Ensembl" id="ENST00000344777.11">
    <molecule id="Q13268-2"/>
    <property type="protein sequence ID" value="ENSP00000344674.7"/>
    <property type="gene ID" value="ENSG00000100867.15"/>
</dbReference>
<dbReference type="Ensembl" id="ENST00000611765.4">
    <molecule id="Q13268-2"/>
    <property type="protein sequence ID" value="ENSP00000481607.1"/>
    <property type="gene ID" value="ENSG00000100867.15"/>
</dbReference>
<dbReference type="GeneID" id="10202"/>
<dbReference type="KEGG" id="hsa:10202"/>
<dbReference type="MANE-Select" id="ENST00000250383.11">
    <property type="protein sequence ID" value="ENSP00000250383.7"/>
    <property type="RefSeq nucleotide sequence ID" value="NM_005794.4"/>
    <property type="RefSeq protein sequence ID" value="NP_005785.1"/>
</dbReference>
<dbReference type="UCSC" id="uc001wkt.5">
    <molecule id="Q13268-1"/>
    <property type="organism name" value="human"/>
</dbReference>
<dbReference type="AGR" id="HGNC:18349"/>
<dbReference type="CTD" id="10202"/>
<dbReference type="DisGeNET" id="10202"/>
<dbReference type="GeneCards" id="DHRS2"/>
<dbReference type="HGNC" id="HGNC:18349">
    <property type="gene designation" value="DHRS2"/>
</dbReference>
<dbReference type="HPA" id="ENSG00000100867">
    <property type="expression patterns" value="Tissue enhanced (breast, urinary bladder)"/>
</dbReference>
<dbReference type="MIM" id="615194">
    <property type="type" value="gene"/>
</dbReference>
<dbReference type="neXtProt" id="NX_Q13268"/>
<dbReference type="OpenTargets" id="ENSG00000100867"/>
<dbReference type="PharmGKB" id="PA38318"/>
<dbReference type="VEuPathDB" id="HostDB:ENSG00000100867"/>
<dbReference type="eggNOG" id="KOG0725">
    <property type="taxonomic scope" value="Eukaryota"/>
</dbReference>
<dbReference type="GeneTree" id="ENSGT00940000162664"/>
<dbReference type="HOGENOM" id="CLU_010194_1_1_1"/>
<dbReference type="InParanoid" id="Q13268"/>
<dbReference type="OMA" id="MTYRASK"/>
<dbReference type="OrthoDB" id="1669814at2759"/>
<dbReference type="PAN-GO" id="Q13268">
    <property type="GO annotations" value="1 GO annotation based on evolutionary models"/>
</dbReference>
<dbReference type="TreeFam" id="TF315405"/>
<dbReference type="PathwayCommons" id="Q13268"/>
<dbReference type="SABIO-RK" id="Q13268"/>
<dbReference type="SignaLink" id="Q13268"/>
<dbReference type="BioGRID-ORCS" id="10202">
    <property type="hits" value="9 hits in 1164 CRISPR screens"/>
</dbReference>
<dbReference type="ChiTaRS" id="DHRS2">
    <property type="organism name" value="human"/>
</dbReference>
<dbReference type="GeneWiki" id="DHRS2"/>
<dbReference type="GenomeRNAi" id="10202"/>
<dbReference type="Pharos" id="Q13268">
    <property type="development level" value="Tbio"/>
</dbReference>
<dbReference type="PRO" id="PR:Q13268"/>
<dbReference type="Proteomes" id="UP000005640">
    <property type="component" value="Chromosome 14"/>
</dbReference>
<dbReference type="RNAct" id="Q13268">
    <property type="molecule type" value="protein"/>
</dbReference>
<dbReference type="Bgee" id="ENSG00000100867">
    <property type="expression patterns" value="Expressed in mucosa of urinary bladder and 128 other cell types or tissues"/>
</dbReference>
<dbReference type="ExpressionAtlas" id="Q13268">
    <property type="expression patterns" value="baseline and differential"/>
</dbReference>
<dbReference type="GO" id="GO:0005737">
    <property type="term" value="C:cytoplasm"/>
    <property type="evidence" value="ECO:0000314"/>
    <property type="project" value="UniProtKB"/>
</dbReference>
<dbReference type="GO" id="GO:0005759">
    <property type="term" value="C:mitochondrial matrix"/>
    <property type="evidence" value="ECO:0007669"/>
    <property type="project" value="UniProtKB-SubCell"/>
</dbReference>
<dbReference type="GO" id="GO:0005739">
    <property type="term" value="C:mitochondrion"/>
    <property type="evidence" value="ECO:0000314"/>
    <property type="project" value="HPA"/>
</dbReference>
<dbReference type="GO" id="GO:0005635">
    <property type="term" value="C:nuclear envelope"/>
    <property type="evidence" value="ECO:0000314"/>
    <property type="project" value="UniProtKB"/>
</dbReference>
<dbReference type="GO" id="GO:0005654">
    <property type="term" value="C:nucleoplasm"/>
    <property type="evidence" value="ECO:0000314"/>
    <property type="project" value="HPA"/>
</dbReference>
<dbReference type="GO" id="GO:0005634">
    <property type="term" value="C:nucleus"/>
    <property type="evidence" value="ECO:0000314"/>
    <property type="project" value="UniProtKB"/>
</dbReference>
<dbReference type="GO" id="GO:0004090">
    <property type="term" value="F:carbonyl reductase (NADPH) activity"/>
    <property type="evidence" value="ECO:0000314"/>
    <property type="project" value="UniProtKB"/>
</dbReference>
<dbReference type="GO" id="GO:0016616">
    <property type="term" value="F:oxidoreductase activity, acting on the CH-OH group of donors, NAD or NADP as acceptor"/>
    <property type="evidence" value="ECO:0000314"/>
    <property type="project" value="UniProtKB"/>
</dbReference>
<dbReference type="GO" id="GO:0008207">
    <property type="term" value="P:C21-steroid hormone metabolic process"/>
    <property type="evidence" value="ECO:0000303"/>
    <property type="project" value="UniProtKB"/>
</dbReference>
<dbReference type="GO" id="GO:0034599">
    <property type="term" value="P:cellular response to oxidative stress"/>
    <property type="evidence" value="ECO:0000314"/>
    <property type="project" value="UniProtKB"/>
</dbReference>
<dbReference type="GO" id="GO:0022900">
    <property type="term" value="P:electron transport chain"/>
    <property type="evidence" value="ECO:0000314"/>
    <property type="project" value="UniProtKB"/>
</dbReference>
<dbReference type="GO" id="GO:0043011">
    <property type="term" value="P:myeloid dendritic cell differentiation"/>
    <property type="evidence" value="ECO:0000270"/>
    <property type="project" value="UniProtKB"/>
</dbReference>
<dbReference type="GO" id="GO:0043066">
    <property type="term" value="P:negative regulation of apoptotic process"/>
    <property type="evidence" value="ECO:0000315"/>
    <property type="project" value="UniProtKB"/>
</dbReference>
<dbReference type="GO" id="GO:0008285">
    <property type="term" value="P:negative regulation of cell population proliferation"/>
    <property type="evidence" value="ECO:0000303"/>
    <property type="project" value="UniProtKB"/>
</dbReference>
<dbReference type="GO" id="GO:0009636">
    <property type="term" value="P:response to toxic substance"/>
    <property type="evidence" value="ECO:0000314"/>
    <property type="project" value="UniProtKB"/>
</dbReference>
<dbReference type="FunFam" id="3.40.50.720:FF:000084">
    <property type="entry name" value="Short-chain dehydrogenase reductase"/>
    <property type="match status" value="1"/>
</dbReference>
<dbReference type="Gene3D" id="3.40.50.720">
    <property type="entry name" value="NAD(P)-binding Rossmann-like Domain"/>
    <property type="match status" value="1"/>
</dbReference>
<dbReference type="InterPro" id="IPR036291">
    <property type="entry name" value="NAD(P)-bd_dom_sf"/>
</dbReference>
<dbReference type="InterPro" id="IPR020904">
    <property type="entry name" value="Sc_DH/Rdtase_CS"/>
</dbReference>
<dbReference type="InterPro" id="IPR002347">
    <property type="entry name" value="SDR_fam"/>
</dbReference>
<dbReference type="NCBIfam" id="NF005559">
    <property type="entry name" value="PRK07231.1"/>
    <property type="match status" value="1"/>
</dbReference>
<dbReference type="PANTHER" id="PTHR43943">
    <property type="entry name" value="DEHYDROGENASE/REDUCTASE (SDR FAMILY) MEMBER 4"/>
    <property type="match status" value="1"/>
</dbReference>
<dbReference type="PANTHER" id="PTHR43943:SF3">
    <property type="entry name" value="DEHYDROGENASE_REDUCTASE SDR FAMILY MEMBER 2, MITOCHONDRIAL"/>
    <property type="match status" value="1"/>
</dbReference>
<dbReference type="Pfam" id="PF13561">
    <property type="entry name" value="adh_short_C2"/>
    <property type="match status" value="1"/>
</dbReference>
<dbReference type="PRINTS" id="PR00081">
    <property type="entry name" value="GDHRDH"/>
</dbReference>
<dbReference type="PRINTS" id="PR00080">
    <property type="entry name" value="SDRFAMILY"/>
</dbReference>
<dbReference type="SUPFAM" id="SSF51735">
    <property type="entry name" value="NAD(P)-binding Rossmann-fold domains"/>
    <property type="match status" value="1"/>
</dbReference>
<dbReference type="PROSITE" id="PS00061">
    <property type="entry name" value="ADH_SHORT"/>
    <property type="match status" value="1"/>
</dbReference>
<organism>
    <name type="scientific">Homo sapiens</name>
    <name type="common">Human</name>
    <dbReference type="NCBI Taxonomy" id="9606"/>
    <lineage>
        <taxon>Eukaryota</taxon>
        <taxon>Metazoa</taxon>
        <taxon>Chordata</taxon>
        <taxon>Craniata</taxon>
        <taxon>Vertebrata</taxon>
        <taxon>Euteleostomi</taxon>
        <taxon>Mammalia</taxon>
        <taxon>Eutheria</taxon>
        <taxon>Euarchontoglires</taxon>
        <taxon>Primates</taxon>
        <taxon>Haplorrhini</taxon>
        <taxon>Catarrhini</taxon>
        <taxon>Hominidae</taxon>
        <taxon>Homo</taxon>
    </lineage>
</organism>
<feature type="transit peptide" description="Mitochondrion" evidence="9">
    <location>
        <begin position="1"/>
        <end position="23"/>
    </location>
</feature>
<feature type="chain" id="PRO_0000054642" description="Dehydrogenase/reductase SDR family member 2, mitochondrial">
    <location>
        <begin position="24"/>
        <end position="280"/>
    </location>
</feature>
<feature type="active site" description="Proton acceptor" evidence="3">
    <location>
        <position position="185"/>
    </location>
</feature>
<feature type="binding site" evidence="1">
    <location>
        <position position="46"/>
    </location>
    <ligand>
        <name>NAD(+)</name>
        <dbReference type="ChEBI" id="CHEBI:57540"/>
    </ligand>
</feature>
<feature type="binding site" evidence="1">
    <location>
        <position position="48"/>
    </location>
    <ligand>
        <name>NAD(+)</name>
        <dbReference type="ChEBI" id="CHEBI:57540"/>
    </ligand>
</feature>
<feature type="binding site" evidence="1">
    <location>
        <position position="172"/>
    </location>
    <ligand>
        <name>substrate</name>
    </ligand>
</feature>
<feature type="binding site" evidence="1">
    <location>
        <position position="185"/>
    </location>
    <ligand>
        <name>NAD(+)</name>
        <dbReference type="ChEBI" id="CHEBI:57540"/>
    </ligand>
</feature>
<feature type="binding site" evidence="1">
    <location>
        <position position="189"/>
    </location>
    <ligand>
        <name>NAD(+)</name>
        <dbReference type="ChEBI" id="CHEBI:57540"/>
    </ligand>
</feature>
<feature type="binding site" evidence="1">
    <location>
        <position position="220"/>
    </location>
    <ligand>
        <name>NAD(+)</name>
        <dbReference type="ChEBI" id="CHEBI:57540"/>
    </ligand>
</feature>
<feature type="modified residue" description="N6-acetyllysine; alternate" evidence="2">
    <location>
        <position position="96"/>
    </location>
</feature>
<feature type="modified residue" description="N6-succinyllysine; alternate" evidence="2">
    <location>
        <position position="96"/>
    </location>
</feature>
<feature type="modified residue" description="N6-acetyllysine; alternate" evidence="2">
    <location>
        <position position="219"/>
    </location>
</feature>
<feature type="modified residue" description="N6-succinyllysine; alternate" evidence="2">
    <location>
        <position position="219"/>
    </location>
</feature>
<feature type="modified residue" description="Phosphoserine" evidence="2">
    <location>
        <position position="223"/>
    </location>
</feature>
<feature type="modified residue" description="N6-succinyllysine" evidence="2">
    <location>
        <position position="237"/>
    </location>
</feature>
<feature type="splice variant" id="VSP_038179" description="In isoform 2." evidence="10">
    <original>FHGNESLWKNFKEHHQLQRIGESEDCAGIVSFLCSPDASYVNGENIAVAGYSTRL</original>
    <variation>VRIGFMGMSLSGRTSRNIISCRGLGSQRTVQESCPSCALQMPATSTGRTLRWQATPLGSERSGGGCVAVVPGPGA</variation>
    <location>
        <begin position="226"/>
        <end position="280"/>
    </location>
</feature>
<feature type="sequence variant" id="VAR_035846" description="In a colorectal cancer sample; somatic mutation; dbSNP:rs148991912." evidence="6">
    <original>A</original>
    <variation>V</variation>
    <location>
        <position position="272"/>
    </location>
</feature>
<feature type="sequence conflict" description="In Ref. 3; BAD96577." evidence="13" ref="3">
    <original>H</original>
    <variation>R</variation>
    <location>
        <position position="14"/>
    </location>
</feature>
<feature type="sequence conflict" description="In Ref. 7; AA sequence." evidence="13" ref="7">
    <original>L</original>
    <variation>V</variation>
    <location>
        <position position="80"/>
    </location>
</feature>
<feature type="sequence conflict" description="In Ref. 7; AA sequence." evidence="13" ref="7">
    <original>L</original>
    <variation>G</variation>
    <location>
        <position position="85"/>
    </location>
</feature>
<feature type="sequence conflict" description="In Ref. 3; BAD96577." evidence="13" ref="3">
    <original>L</original>
    <variation>P</variation>
    <location>
        <position position="151"/>
    </location>
</feature>
<feature type="sequence conflict" description="In Ref. 3; BAD96577." evidence="13" ref="3">
    <original>I</original>
    <variation>V</variation>
    <location>
        <position position="173"/>
    </location>
</feature>
<feature type="sequence conflict" description="In Ref. 3; BAD96577." evidence="13" ref="3">
    <original>N</original>
    <variation>S</variation>
    <location>
        <position position="186"/>
    </location>
</feature>
<protein>
    <recommendedName>
        <fullName evidence="11">Dehydrogenase/reductase SDR family member 2, mitochondrial</fullName>
        <ecNumber evidence="5">1.1.1.-</ecNumber>
    </recommendedName>
    <alternativeName>
        <fullName evidence="12">Dicarbonyl reductase HEP27</fullName>
    </alternativeName>
    <alternativeName>
        <fullName>Protein D</fullName>
    </alternativeName>
    <alternativeName>
        <fullName evidence="11">Short chain dehydrogenase/reductase family 25C member 1</fullName>
        <shortName evidence="11">Protein SDR25C1</shortName>
    </alternativeName>
</protein>
<reference key="1">
    <citation type="journal article" date="1995" name="Eur. J. Biochem.">
        <title>A nuclear protein, synthesized in growth-arrested human hepatoblastoma cells, is a novel member of the short-chain alcohol dehydrogenase family.</title>
        <authorList>
            <person name="Gabrielli F."/>
            <person name="Donadel G."/>
            <person name="Bensi G."/>
            <person name="Heguy A."/>
            <person name="Melli M."/>
        </authorList>
    </citation>
    <scope>NUCLEOTIDE SEQUENCE [MRNA] (ISOFORM 1)</scope>
    <scope>PROTEIN SEQUENCE OF 24-41</scope>
    <source>
        <tissue>Hepatoma</tissue>
    </source>
</reference>
<reference key="2">
    <citation type="journal article" date="2002" name="Biochim. Biophys. Acta">
        <title>A human short-chain dehydrogenase/reductase gene: structure, chromosomal localization, tissue expression and subcellular localization of its product.</title>
        <authorList>
            <person name="Pellegrini S."/>
            <person name="Censini S."/>
            <person name="Guidotti S."/>
            <person name="Iacopetti P."/>
            <person name="Rocchi M."/>
            <person name="Bianchi M."/>
            <person name="Covacci A."/>
            <person name="Gabrielli F."/>
        </authorList>
    </citation>
    <scope>NUCLEOTIDE SEQUENCE [GENOMIC DNA]</scope>
    <scope>SUBCELLULAR LOCATION</scope>
</reference>
<reference key="3">
    <citation type="submission" date="2005-04" db="EMBL/GenBank/DDBJ databases">
        <authorList>
            <person name="Suzuki Y."/>
            <person name="Sugano S."/>
            <person name="Totoki Y."/>
            <person name="Toyoda A."/>
            <person name="Takeda T."/>
            <person name="Sakaki Y."/>
            <person name="Tanaka A."/>
            <person name="Yokoyama S."/>
        </authorList>
    </citation>
    <scope>NUCLEOTIDE SEQUENCE [LARGE SCALE MRNA] (ISOFORM 1)</scope>
    <source>
        <tissue>Liver</tissue>
    </source>
</reference>
<reference key="4">
    <citation type="journal article" date="2003" name="Nature">
        <title>The DNA sequence and analysis of human chromosome 14.</title>
        <authorList>
            <person name="Heilig R."/>
            <person name="Eckenberg R."/>
            <person name="Petit J.-L."/>
            <person name="Fonknechten N."/>
            <person name="Da Silva C."/>
            <person name="Cattolico L."/>
            <person name="Levy M."/>
            <person name="Barbe V."/>
            <person name="De Berardinis V."/>
            <person name="Ureta-Vidal A."/>
            <person name="Pelletier E."/>
            <person name="Vico V."/>
            <person name="Anthouard V."/>
            <person name="Rowen L."/>
            <person name="Madan A."/>
            <person name="Qin S."/>
            <person name="Sun H."/>
            <person name="Du H."/>
            <person name="Pepin K."/>
            <person name="Artiguenave F."/>
            <person name="Robert C."/>
            <person name="Cruaud C."/>
            <person name="Bruels T."/>
            <person name="Jaillon O."/>
            <person name="Friedlander L."/>
            <person name="Samson G."/>
            <person name="Brottier P."/>
            <person name="Cure S."/>
            <person name="Segurens B."/>
            <person name="Aniere F."/>
            <person name="Samain S."/>
            <person name="Crespeau H."/>
            <person name="Abbasi N."/>
            <person name="Aiach N."/>
            <person name="Boscus D."/>
            <person name="Dickhoff R."/>
            <person name="Dors M."/>
            <person name="Dubois I."/>
            <person name="Friedman C."/>
            <person name="Gouyvenoux M."/>
            <person name="James R."/>
            <person name="Madan A."/>
            <person name="Mairey-Estrada B."/>
            <person name="Mangenot S."/>
            <person name="Martins N."/>
            <person name="Menard M."/>
            <person name="Oztas S."/>
            <person name="Ratcliffe A."/>
            <person name="Shaffer T."/>
            <person name="Trask B."/>
            <person name="Vacherie B."/>
            <person name="Bellemere C."/>
            <person name="Belser C."/>
            <person name="Besnard-Gonnet M."/>
            <person name="Bartol-Mavel D."/>
            <person name="Boutard M."/>
            <person name="Briez-Silla S."/>
            <person name="Combette S."/>
            <person name="Dufosse-Laurent V."/>
            <person name="Ferron C."/>
            <person name="Lechaplais C."/>
            <person name="Louesse C."/>
            <person name="Muselet D."/>
            <person name="Magdelenat G."/>
            <person name="Pateau E."/>
            <person name="Petit E."/>
            <person name="Sirvain-Trukniewicz P."/>
            <person name="Trybou A."/>
            <person name="Vega-Czarny N."/>
            <person name="Bataille E."/>
            <person name="Bluet E."/>
            <person name="Bordelais I."/>
            <person name="Dubois M."/>
            <person name="Dumont C."/>
            <person name="Guerin T."/>
            <person name="Haffray S."/>
            <person name="Hammadi R."/>
            <person name="Muanga J."/>
            <person name="Pellouin V."/>
            <person name="Robert D."/>
            <person name="Wunderle E."/>
            <person name="Gauguet G."/>
            <person name="Roy A."/>
            <person name="Sainte-Marthe L."/>
            <person name="Verdier J."/>
            <person name="Verdier-Discala C."/>
            <person name="Hillier L.W."/>
            <person name="Fulton L."/>
            <person name="McPherson J."/>
            <person name="Matsuda F."/>
            <person name="Wilson R."/>
            <person name="Scarpelli C."/>
            <person name="Gyapay G."/>
            <person name="Wincker P."/>
            <person name="Saurin W."/>
            <person name="Quetier F."/>
            <person name="Waterston R."/>
            <person name="Hood L."/>
            <person name="Weissenbach J."/>
        </authorList>
    </citation>
    <scope>NUCLEOTIDE SEQUENCE [LARGE SCALE GENOMIC DNA]</scope>
</reference>
<reference key="5">
    <citation type="submission" date="2005-09" db="EMBL/GenBank/DDBJ databases">
        <authorList>
            <person name="Mural R.J."/>
            <person name="Istrail S."/>
            <person name="Sutton G.G."/>
            <person name="Florea L."/>
            <person name="Halpern A.L."/>
            <person name="Mobarry C.M."/>
            <person name="Lippert R."/>
            <person name="Walenz B."/>
            <person name="Shatkay H."/>
            <person name="Dew I."/>
            <person name="Miller J.R."/>
            <person name="Flanigan M.J."/>
            <person name="Edwards N.J."/>
            <person name="Bolanos R."/>
            <person name="Fasulo D."/>
            <person name="Halldorsson B.V."/>
            <person name="Hannenhalli S."/>
            <person name="Turner R."/>
            <person name="Yooseph S."/>
            <person name="Lu F."/>
            <person name="Nusskern D.R."/>
            <person name="Shue B.C."/>
            <person name="Zheng X.H."/>
            <person name="Zhong F."/>
            <person name="Delcher A.L."/>
            <person name="Huson D.H."/>
            <person name="Kravitz S.A."/>
            <person name="Mouchard L."/>
            <person name="Reinert K."/>
            <person name="Remington K.A."/>
            <person name="Clark A.G."/>
            <person name="Waterman M.S."/>
            <person name="Eichler E.E."/>
            <person name="Adams M.D."/>
            <person name="Hunkapiller M.W."/>
            <person name="Myers E.W."/>
            <person name="Venter J.C."/>
        </authorList>
    </citation>
    <scope>NUCLEOTIDE SEQUENCE [LARGE SCALE GENOMIC DNA]</scope>
</reference>
<reference key="6">
    <citation type="journal article" date="2004" name="Genome Res.">
        <title>The status, quality, and expansion of the NIH full-length cDNA project: the Mammalian Gene Collection (MGC).</title>
        <authorList>
            <consortium name="The MGC Project Team"/>
        </authorList>
    </citation>
    <scope>NUCLEOTIDE SEQUENCE [LARGE SCALE MRNA] (ISOFORM 2)</scope>
    <scope>NUCLEOTIDE SEQUENCE [LARGE SCALE MRNA] OF 10-280 (ISOFORM 1)</scope>
    <source>
        <tissue>Skin</tissue>
    </source>
</reference>
<reference key="7">
    <citation type="journal article" date="1991" name="Eur. J. Biochem.">
        <title>Identification of a novel nuclear protein synthesized in growth-arrested human hepatoblastoma HepG2 cells.</title>
        <authorList>
            <person name="Donadel G."/>
            <person name="Garzelli C."/>
            <person name="Frank R."/>
            <person name="Gabrielli F."/>
        </authorList>
    </citation>
    <scope>PROTEIN SEQUENCE OF 80-88; 141-146; 148-162 AND 198-205</scope>
    <scope>SUBCELLULAR LOCATION</scope>
</reference>
<reference key="8">
    <citation type="journal article" date="2002" name="Genomics">
        <title>Genomic organization of the human gene HEP27: alternative promoter usage in HepG2 cells and monocyte-derived dendritic cells.</title>
        <authorList>
            <person name="Heinz S."/>
            <person name="Krause S.W."/>
            <person name="Gabrielli F."/>
            <person name="Wagner H.M."/>
            <person name="Andreesen R."/>
            <person name="Rehli M."/>
        </authorList>
    </citation>
    <scope>TISSUE SPECIFICITY</scope>
    <scope>INDUCTION</scope>
</reference>
<reference key="9">
    <citation type="journal article" date="2006" name="Cell. Mol. Life Sci.">
        <title>Hep27, a member of the short-chain dehydrogenase/reductase family, is an NADPH-dependent dicarbonyl reductase expressed in vascular endothelial tissue.</title>
        <authorList>
            <person name="Shafqat N."/>
            <person name="Shafqat J."/>
            <person name="Eissner G."/>
            <person name="Marschall H.U."/>
            <person name="Tryggvason K."/>
            <person name="Eriksson U."/>
            <person name="Gabrielli F."/>
            <person name="Lardy H."/>
            <person name="Jornvall H."/>
            <person name="Oppermann U."/>
        </authorList>
    </citation>
    <scope>FUNCTION</scope>
    <scope>BIOPHYSICOCHEMICAL PROPERTIES</scope>
</reference>
<reference key="10">
    <citation type="journal article" date="2009" name="Chem. Biol. Interact.">
        <title>The SDR (short-chain dehydrogenase/reductase and related enzymes) nomenclature initiative.</title>
        <authorList>
            <person name="Persson B."/>
            <person name="Kallberg Y."/>
            <person name="Bray J.E."/>
            <person name="Bruford E."/>
            <person name="Dellaporta S.L."/>
            <person name="Favia A.D."/>
            <person name="Duarte R.G."/>
            <person name="Joernvall H."/>
            <person name="Kavanagh K.L."/>
            <person name="Kedishvili N."/>
            <person name="Kisiela M."/>
            <person name="Maser E."/>
            <person name="Mindnich R."/>
            <person name="Orchard S."/>
            <person name="Penning T.M."/>
            <person name="Thornton J.M."/>
            <person name="Adamski J."/>
            <person name="Oppermann U."/>
        </authorList>
    </citation>
    <scope>GENE FAMILY</scope>
    <scope>NOMENCLATURE</scope>
</reference>
<reference key="11">
    <citation type="journal article" date="2010" name="Mol. Cell. Biol.">
        <title>Mitochondrial Hep27 is a c-Myb target gene that inhibits Mdm2 and stabilizes p53.</title>
        <authorList>
            <person name="Deisenroth C."/>
            <person name="Thorner A.R."/>
            <person name="Enomoto T."/>
            <person name="Perou C.M."/>
            <person name="Zhang Y."/>
        </authorList>
    </citation>
    <scope>FUNCTION</scope>
    <scope>INTERACTION WITH MDM2</scope>
    <scope>IDENTIFICATION OF MITOCHONDRIAL TRANSIT PEPTIDE CLEAVAGE SITE</scope>
    <scope>SUBCELLULAR LOCATION</scope>
</reference>
<reference key="12">
    <citation type="journal article" date="2011" name="BMC Syst. Biol.">
        <title>Initial characterization of the human central proteome.</title>
        <authorList>
            <person name="Burkard T.R."/>
            <person name="Planyavsky M."/>
            <person name="Kaupe I."/>
            <person name="Breitwieser F.P."/>
            <person name="Buerckstuemmer T."/>
            <person name="Bennett K.L."/>
            <person name="Superti-Furga G."/>
            <person name="Colinge J."/>
        </authorList>
    </citation>
    <scope>IDENTIFICATION BY MASS SPECTROMETRY [LARGE SCALE ANALYSIS]</scope>
</reference>
<reference key="13">
    <citation type="journal article" date="2006" name="Science">
        <title>The consensus coding sequences of human breast and colorectal cancers.</title>
        <authorList>
            <person name="Sjoeblom T."/>
            <person name="Jones S."/>
            <person name="Wood L.D."/>
            <person name="Parsons D.W."/>
            <person name="Lin J."/>
            <person name="Barber T.D."/>
            <person name="Mandelker D."/>
            <person name="Leary R.J."/>
            <person name="Ptak J."/>
            <person name="Silliman N."/>
            <person name="Szabo S."/>
            <person name="Buckhaults P."/>
            <person name="Farrell C."/>
            <person name="Meeh P."/>
            <person name="Markowitz S.D."/>
            <person name="Willis J."/>
            <person name="Dawson D."/>
            <person name="Willson J.K.V."/>
            <person name="Gazdar A.F."/>
            <person name="Hartigan J."/>
            <person name="Wu L."/>
            <person name="Liu C."/>
            <person name="Parmigiani G."/>
            <person name="Park B.H."/>
            <person name="Bachman K.E."/>
            <person name="Papadopoulos N."/>
            <person name="Vogelstein B."/>
            <person name="Kinzler K.W."/>
            <person name="Velculescu V.E."/>
        </authorList>
    </citation>
    <scope>VARIANT [LARGE SCALE ANALYSIS] VAL-272</scope>
</reference>
<reference key="14">
    <citation type="journal article" date="2018" name="Oncogene">
        <title>DHRS2 inhibits cell growth and motility in esophageal squamous cell carcinoma.</title>
        <authorList>
            <person name="Zhou Y."/>
            <person name="Wang L."/>
            <person name="Ban X."/>
            <person name="Zeng T."/>
            <person name="Zhu Y."/>
            <person name="Li M."/>
            <person name="Guan X.Y."/>
            <person name="Li Y."/>
        </authorList>
    </citation>
    <scope>FUNCTION</scope>
</reference>
<sequence length="280" mass="29927">MLSAVARGYQGWFHPCARLSVRMSSTGIDRKGVLANRVAVVTGSTSGIGFAIARRLARDGAHVVISSRKQQNVDRAMAKLQGEGLSVAGIVCHVGKAEDREQLVAKALEHCGGVDFLVCSAGVNPLVGSTLGTSEQIWDKILSVNVKSPALLLSQLLPYMENRRGAVILVSSIAAYNPVVALGVYNVSKTALLGLTRTLALELAPKDIRVNCVVPGIIKTDFSKVFHGNESLWKNFKEHHQLQRIGESEDCAGIVSFLCSPDASYVNGENIAVAGYSTRL</sequence>
<gene>
    <name evidence="14" type="primary">DHRS2</name>
    <name type="synonym">SDR25C1</name>
</gene>
<comment type="function">
    <text evidence="5 7 8">NADPH-dependent oxidoreductase which catalyzes the reduction of dicarbonyl compounds. Displays reductase activity in vitro with 3,4-hexanedione, 2,3-heptanedione and 1-phenyl-1,2-propanedione as substrates (PubMed:16685466). May function as a dicarbonyl reductase in the enzymatic inactivation of reactive carbonyls involved in covalent modification of cellular components (PubMed:16685466). Also displays a minor hydroxysteroid dehydrogenase activity toward bile acids such as ursodeoxycholic acid (UDCA) and isoursodeoxycholic acid (isoUDCA), which makes it unlikely to control hormone levels (PubMed:16685466). Doesn't show any activity in vitro with retinoids and sugars as substrates (PubMed:16685466). Attenuates MDM2-mediated p53/TP53 degradation, leading to p53/TP53 stabilization and increased transcription activity, resulting in the accumulation of MDM2 and CDKN1A/p21 (PubMed:20547751). Reduces proliferation, migration and invasion of cancer cells and well as the production of ROS in cancer (PubMed:29106393).</text>
</comment>
<comment type="biophysicochemical properties">
    <kinetics>
        <KM evidence="5">0.3 mM for 1-phenyl-1,2-propanedione</KM>
        <KM evidence="5">1.1 mM for 2,3-heptanedione</KM>
        <KM evidence="5">0.8 mM for 3,4-hexanedione</KM>
        <text>kcat is 15.2 min(-1) with 1-phenyl-1,2-propanedione as substrate. kcat is 40.0 min(-1) with 2,3-heptanedione as substrate. kcat is 11.7 min(-1) with 3,4-hexanedione as substrate.</text>
    </kinetics>
</comment>
<comment type="subunit">
    <text evidence="7">Directly interacts with MDM2; this interaction occurs in the nucleus and does not target DHRS2 to degradation.</text>
</comment>
<comment type="interaction">
    <interactant intactId="EBI-354324">
        <id>Q13268</id>
    </interactant>
    <interactant intactId="EBI-743771">
        <id>Q92624</id>
        <label>APPBP2</label>
    </interactant>
    <organismsDiffer>false</organismsDiffer>
    <experiments>3</experiments>
</comment>
<comment type="subcellular location">
    <subcellularLocation>
        <location>Mitochondrion matrix</location>
    </subcellularLocation>
    <subcellularLocation>
        <location>Nucleus</location>
    </subcellularLocation>
    <text>A minor fraction of the protein is translocated from the mitochondria to the nucleus, after cleavage of the targeting signal.</text>
</comment>
<comment type="alternative products">
    <event type="alternative splicing"/>
    <isoform>
        <id>Q13268-1</id>
        <name>1</name>
        <sequence type="displayed"/>
    </isoform>
    <isoform>
        <id>Q13268-2</id>
        <name>2</name>
        <sequence type="described" ref="VSP_038179"/>
    </isoform>
</comment>
<comment type="tissue specificity">
    <text evidence="4">Widely expressed, with highest levels in liver and kidney, followed by heart, spleen, skeletal muscle and placenta. In hemopoietic cells, expressed in dendritic cells, but not in monocytes, macrophages, granulocytes, nor in B and T lymphocytes.</text>
</comment>
<comment type="induction">
    <text evidence="4">Up-regulated by IL4 and CSF2 in monocytes/macrophages. Down-regulated by bacterial lipopolysaccharides (LPS) and TNF in monocytice-derived dendritic cells. Up-regulated by MYB.</text>
</comment>
<comment type="similarity">
    <text evidence="13">Belongs to the short-chain dehydrogenases/reductases (SDR) family.</text>
</comment>
<proteinExistence type="evidence at protein level"/>
<keyword id="KW-0007">Acetylation</keyword>
<keyword id="KW-0025">Alternative splicing</keyword>
<keyword id="KW-0903">Direct protein sequencing</keyword>
<keyword id="KW-0496">Mitochondrion</keyword>
<keyword id="KW-0520">NAD</keyword>
<keyword id="KW-0539">Nucleus</keyword>
<keyword id="KW-0560">Oxidoreductase</keyword>
<keyword id="KW-0597">Phosphoprotein</keyword>
<keyword id="KW-1267">Proteomics identification</keyword>
<keyword id="KW-1185">Reference proteome</keyword>
<keyword id="KW-0809">Transit peptide</keyword>
<accession>Q13268</accession>
<accession>D3DS54</accession>
<accession>Q53GS4</accession>
<accession>Q7Z789</accession>
<accession>Q9H2R2</accession>
<evidence type="ECO:0000250" key="1">
    <source>
        <dbReference type="UniProtKB" id="Q99714"/>
    </source>
</evidence>
<evidence type="ECO:0000250" key="2">
    <source>
        <dbReference type="UniProtKB" id="Q99LB2"/>
    </source>
</evidence>
<evidence type="ECO:0000255" key="3">
    <source>
        <dbReference type="PROSITE-ProRule" id="PRU10001"/>
    </source>
</evidence>
<evidence type="ECO:0000269" key="4">
    <source>
    </source>
</evidence>
<evidence type="ECO:0000269" key="5">
    <source>
    </source>
</evidence>
<evidence type="ECO:0000269" key="6">
    <source>
    </source>
</evidence>
<evidence type="ECO:0000269" key="7">
    <source>
    </source>
</evidence>
<evidence type="ECO:0000269" key="8">
    <source>
    </source>
</evidence>
<evidence type="ECO:0000269" key="9">
    <source>
    </source>
</evidence>
<evidence type="ECO:0000303" key="10">
    <source>
    </source>
</evidence>
<evidence type="ECO:0000303" key="11">
    <source>
    </source>
</evidence>
<evidence type="ECO:0000303" key="12">
    <source>
    </source>
</evidence>
<evidence type="ECO:0000305" key="13"/>
<evidence type="ECO:0000312" key="14">
    <source>
        <dbReference type="HGNC" id="HGNC:18349"/>
    </source>
</evidence>
<name>DHRS2_HUMAN</name>